<name>CWP11_SOLLC</name>
<comment type="subcellular location">
    <subcellularLocation>
        <location evidence="1">Secreted</location>
        <location evidence="1">Cell wall</location>
    </subcellularLocation>
</comment>
<proteinExistence type="evidence at protein level"/>
<feature type="chain" id="PRO_0000079662" description="35 kDa cell wall protein">
    <location>
        <begin position="1"/>
        <end position="10" status="greater than"/>
    </location>
</feature>
<feature type="non-terminal residue" evidence="2">
    <location>
        <position position="10"/>
    </location>
</feature>
<keyword id="KW-0134">Cell wall</keyword>
<keyword id="KW-0903">Direct protein sequencing</keyword>
<keyword id="KW-1185">Reference proteome</keyword>
<keyword id="KW-0964">Secreted</keyword>
<dbReference type="InParanoid" id="P80808"/>
<dbReference type="Proteomes" id="UP000004994">
    <property type="component" value="Unplaced"/>
</dbReference>
<dbReference type="GO" id="GO:0005576">
    <property type="term" value="C:extracellular region"/>
    <property type="evidence" value="ECO:0007669"/>
    <property type="project" value="UniProtKB-KW"/>
</dbReference>
<protein>
    <recommendedName>
        <fullName>35 kDa cell wall protein</fullName>
    </recommendedName>
</protein>
<reference evidence="3" key="1">
    <citation type="journal article" date="1997" name="J. Biol. Chem.">
        <title>Differential extraction and protein sequencing reveals major differences in patterns of primary cell wall proteins from plants.</title>
        <authorList>
            <person name="Robertson D."/>
            <person name="Mitchell G.P."/>
            <person name="Gilroy J.S."/>
            <person name="Gerrish C."/>
            <person name="Bolwell G.P."/>
            <person name="Slabas A.R."/>
        </authorList>
    </citation>
    <scope>PROTEIN SEQUENCE</scope>
    <scope>SUBCELLULAR LOCATION</scope>
</reference>
<sequence>EQXGRQRQGG</sequence>
<organism>
    <name type="scientific">Solanum lycopersicum</name>
    <name type="common">Tomato</name>
    <name type="synonym">Lycopersicon esculentum</name>
    <dbReference type="NCBI Taxonomy" id="4081"/>
    <lineage>
        <taxon>Eukaryota</taxon>
        <taxon>Viridiplantae</taxon>
        <taxon>Streptophyta</taxon>
        <taxon>Embryophyta</taxon>
        <taxon>Tracheophyta</taxon>
        <taxon>Spermatophyta</taxon>
        <taxon>Magnoliopsida</taxon>
        <taxon>eudicotyledons</taxon>
        <taxon>Gunneridae</taxon>
        <taxon>Pentapetalae</taxon>
        <taxon>asterids</taxon>
        <taxon>lamiids</taxon>
        <taxon>Solanales</taxon>
        <taxon>Solanaceae</taxon>
        <taxon>Solanoideae</taxon>
        <taxon>Solaneae</taxon>
        <taxon>Solanum</taxon>
        <taxon>Solanum subgen. Lycopersicon</taxon>
    </lineage>
</organism>
<accession>P80808</accession>
<evidence type="ECO:0000269" key="1">
    <source>
    </source>
</evidence>
<evidence type="ECO:0000303" key="2">
    <source>
    </source>
</evidence>
<evidence type="ECO:0000305" key="3"/>